<reference key="1">
    <citation type="journal article" date="2000" name="Nature">
        <title>The genome sequence of the food-borne pathogen Campylobacter jejuni reveals hypervariable sequences.</title>
        <authorList>
            <person name="Parkhill J."/>
            <person name="Wren B.W."/>
            <person name="Mungall K.L."/>
            <person name="Ketley J.M."/>
            <person name="Churcher C.M."/>
            <person name="Basham D."/>
            <person name="Chillingworth T."/>
            <person name="Davies R.M."/>
            <person name="Feltwell T."/>
            <person name="Holroyd S."/>
            <person name="Jagels K."/>
            <person name="Karlyshev A.V."/>
            <person name="Moule S."/>
            <person name="Pallen M.J."/>
            <person name="Penn C.W."/>
            <person name="Quail M.A."/>
            <person name="Rajandream M.A."/>
            <person name="Rutherford K.M."/>
            <person name="van Vliet A.H.M."/>
            <person name="Whitehead S."/>
            <person name="Barrell B.G."/>
        </authorList>
    </citation>
    <scope>NUCLEOTIDE SEQUENCE [LARGE SCALE GENOMIC DNA]</scope>
    <source>
        <strain>ATCC 700819 / NCTC 11168</strain>
    </source>
</reference>
<keyword id="KW-0067">ATP-binding</keyword>
<keyword id="KW-0997">Cell inner membrane</keyword>
<keyword id="KW-1003">Cell membrane</keyword>
<keyword id="KW-0472">Membrane</keyword>
<keyword id="KW-0547">Nucleotide-binding</keyword>
<keyword id="KW-1185">Reference proteome</keyword>
<keyword id="KW-0813">Transport</keyword>
<accession>Q0P9X7</accession>
<accession>P45677</accession>
<accession>Q9PP11</accession>
<organism>
    <name type="scientific">Campylobacter jejuni subsp. jejuni serotype O:2 (strain ATCC 700819 / NCTC 11168)</name>
    <dbReference type="NCBI Taxonomy" id="192222"/>
    <lineage>
        <taxon>Bacteria</taxon>
        <taxon>Pseudomonadati</taxon>
        <taxon>Campylobacterota</taxon>
        <taxon>Epsilonproteobacteria</taxon>
        <taxon>Campylobacterales</taxon>
        <taxon>Campylobacteraceae</taxon>
        <taxon>Campylobacter</taxon>
    </lineage>
</organism>
<comment type="function">
    <text evidence="1">Most probably involved, with PEB1, in a binding-protein-dependent transport system for an amino acid. Probably responsible for energy coupling to the transport system (By similarity).</text>
</comment>
<comment type="subcellular location">
    <subcellularLocation>
        <location evidence="3">Cell inner membrane</location>
        <topology evidence="3">Peripheral membrane protein</topology>
    </subcellularLocation>
</comment>
<comment type="similarity">
    <text evidence="3">Belongs to the ABC transporter superfamily.</text>
</comment>
<feature type="chain" id="PRO_0000092681" description="Probable ABC transporter ATP-binding protein PEB1C">
    <location>
        <begin position="1"/>
        <end position="242"/>
    </location>
</feature>
<feature type="domain" description="ABC transporter" evidence="2">
    <location>
        <begin position="2"/>
        <end position="236"/>
    </location>
</feature>
<feature type="binding site" evidence="2">
    <location>
        <begin position="34"/>
        <end position="41"/>
    </location>
    <ligand>
        <name>ATP</name>
        <dbReference type="ChEBI" id="CHEBI:30616"/>
    </ligand>
</feature>
<name>PEB1C_CAMJE</name>
<dbReference type="EMBL" id="AL111168">
    <property type="protein sequence ID" value="CAL35042.1"/>
    <property type="molecule type" value="Genomic_DNA"/>
</dbReference>
<dbReference type="PIR" id="A81366">
    <property type="entry name" value="A81366"/>
</dbReference>
<dbReference type="RefSeq" id="WP_002853259.1">
    <property type="nucleotide sequence ID" value="NZ_SZUC01000001.1"/>
</dbReference>
<dbReference type="RefSeq" id="YP_002344320.1">
    <property type="nucleotide sequence ID" value="NC_002163.1"/>
</dbReference>
<dbReference type="SMR" id="Q0P9X7"/>
<dbReference type="STRING" id="192222.Cj0922c"/>
<dbReference type="PaxDb" id="192222-Cj0922c"/>
<dbReference type="EnsemblBacteria" id="CAL35042">
    <property type="protein sequence ID" value="CAL35042"/>
    <property type="gene ID" value="Cj0922c"/>
</dbReference>
<dbReference type="GeneID" id="905220"/>
<dbReference type="KEGG" id="cje:Cj0922c"/>
<dbReference type="PATRIC" id="fig|192222.6.peg.906"/>
<dbReference type="eggNOG" id="COG1126">
    <property type="taxonomic scope" value="Bacteria"/>
</dbReference>
<dbReference type="HOGENOM" id="CLU_000604_1_22_7"/>
<dbReference type="OrthoDB" id="9809450at2"/>
<dbReference type="Proteomes" id="UP000000799">
    <property type="component" value="Chromosome"/>
</dbReference>
<dbReference type="GO" id="GO:0005886">
    <property type="term" value="C:plasma membrane"/>
    <property type="evidence" value="ECO:0007669"/>
    <property type="project" value="UniProtKB-SubCell"/>
</dbReference>
<dbReference type="GO" id="GO:0015424">
    <property type="term" value="F:ABC-type amino acid transporter activity"/>
    <property type="evidence" value="ECO:0007669"/>
    <property type="project" value="InterPro"/>
</dbReference>
<dbReference type="GO" id="GO:0005524">
    <property type="term" value="F:ATP binding"/>
    <property type="evidence" value="ECO:0007669"/>
    <property type="project" value="UniProtKB-KW"/>
</dbReference>
<dbReference type="GO" id="GO:0016887">
    <property type="term" value="F:ATP hydrolysis activity"/>
    <property type="evidence" value="ECO:0007669"/>
    <property type="project" value="InterPro"/>
</dbReference>
<dbReference type="CDD" id="cd03262">
    <property type="entry name" value="ABC_HisP_GlnQ"/>
    <property type="match status" value="1"/>
</dbReference>
<dbReference type="FunFam" id="3.40.50.300:FF:000020">
    <property type="entry name" value="Amino acid ABC transporter ATP-binding component"/>
    <property type="match status" value="1"/>
</dbReference>
<dbReference type="Gene3D" id="3.40.50.300">
    <property type="entry name" value="P-loop containing nucleotide triphosphate hydrolases"/>
    <property type="match status" value="1"/>
</dbReference>
<dbReference type="InterPro" id="IPR003593">
    <property type="entry name" value="AAA+_ATPase"/>
</dbReference>
<dbReference type="InterPro" id="IPR030679">
    <property type="entry name" value="ABC_ATPase_HisP-typ"/>
</dbReference>
<dbReference type="InterPro" id="IPR003439">
    <property type="entry name" value="ABC_transporter-like_ATP-bd"/>
</dbReference>
<dbReference type="InterPro" id="IPR017871">
    <property type="entry name" value="ABC_transporter-like_CS"/>
</dbReference>
<dbReference type="InterPro" id="IPR050086">
    <property type="entry name" value="MetN_ABC_transporter-like"/>
</dbReference>
<dbReference type="InterPro" id="IPR027417">
    <property type="entry name" value="P-loop_NTPase"/>
</dbReference>
<dbReference type="PANTHER" id="PTHR43166">
    <property type="entry name" value="AMINO ACID IMPORT ATP-BINDING PROTEIN"/>
    <property type="match status" value="1"/>
</dbReference>
<dbReference type="PANTHER" id="PTHR43166:SF4">
    <property type="entry name" value="PHOSPHONATES IMPORT ATP-BINDING PROTEIN PHNC"/>
    <property type="match status" value="1"/>
</dbReference>
<dbReference type="Pfam" id="PF00005">
    <property type="entry name" value="ABC_tran"/>
    <property type="match status" value="1"/>
</dbReference>
<dbReference type="PIRSF" id="PIRSF039085">
    <property type="entry name" value="ABC_ATPase_HisP"/>
    <property type="match status" value="1"/>
</dbReference>
<dbReference type="SMART" id="SM00382">
    <property type="entry name" value="AAA"/>
    <property type="match status" value="1"/>
</dbReference>
<dbReference type="SUPFAM" id="SSF52540">
    <property type="entry name" value="P-loop containing nucleoside triphosphate hydrolases"/>
    <property type="match status" value="1"/>
</dbReference>
<dbReference type="PROSITE" id="PS00211">
    <property type="entry name" value="ABC_TRANSPORTER_1"/>
    <property type="match status" value="1"/>
</dbReference>
<dbReference type="PROSITE" id="PS50893">
    <property type="entry name" value="ABC_TRANSPORTER_2"/>
    <property type="match status" value="1"/>
</dbReference>
<proteinExistence type="inferred from homology"/>
<evidence type="ECO:0000250" key="1"/>
<evidence type="ECO:0000255" key="2">
    <source>
        <dbReference type="PROSITE-ProRule" id="PRU00434"/>
    </source>
</evidence>
<evidence type="ECO:0000305" key="3"/>
<protein>
    <recommendedName>
        <fullName>Probable ABC transporter ATP-binding protein PEB1C</fullName>
    </recommendedName>
</protein>
<gene>
    <name type="primary">peb1C</name>
    <name type="synonym">pebC</name>
    <name type="ordered locus">Cj0922c</name>
</gene>
<sequence length="242" mass="27229">MIELKNVNKYYGTHHVLKNINLSVKEGEKLVIIGPSGSGKSTTIRCMNGLEEVSSGEVVVNNLVLNHKNKIEICRKYCAMVFQHFNLYPHMTVLQNLTLAPMKLQKKSKKEAEETAFKYLKVVGLLDKANVYPATLSGGQQQRVAIARSLCTKKPYILFDEPTSALDPETIQEVLDVMKEISHQSNTTMVVVTHEMGFAKEVADRIIFMEDGAIVEENIPSEFFSNPKTERARLFLGKILKN</sequence>